<protein>
    <recommendedName>
        <fullName evidence="1">Phosphatidylglycerol--prolipoprotein diacylglyceryl transferase</fullName>
        <ecNumber evidence="1">2.5.1.145</ecNumber>
    </recommendedName>
</protein>
<keyword id="KW-0997">Cell inner membrane</keyword>
<keyword id="KW-1003">Cell membrane</keyword>
<keyword id="KW-0472">Membrane</keyword>
<keyword id="KW-0808">Transferase</keyword>
<keyword id="KW-0812">Transmembrane</keyword>
<keyword id="KW-1133">Transmembrane helix</keyword>
<accession>B5BFG7</accession>
<name>LGT_SALPK</name>
<organism>
    <name type="scientific">Salmonella paratyphi A (strain AKU_12601)</name>
    <dbReference type="NCBI Taxonomy" id="554290"/>
    <lineage>
        <taxon>Bacteria</taxon>
        <taxon>Pseudomonadati</taxon>
        <taxon>Pseudomonadota</taxon>
        <taxon>Gammaproteobacteria</taxon>
        <taxon>Enterobacterales</taxon>
        <taxon>Enterobacteriaceae</taxon>
        <taxon>Salmonella</taxon>
    </lineage>
</organism>
<feature type="chain" id="PRO_1000137457" description="Phosphatidylglycerol--prolipoprotein diacylglyceryl transferase">
    <location>
        <begin position="1"/>
        <end position="291"/>
    </location>
</feature>
<feature type="transmembrane region" description="Helical" evidence="1">
    <location>
        <begin position="21"/>
        <end position="41"/>
    </location>
</feature>
<feature type="transmembrane region" description="Helical" evidence="1">
    <location>
        <begin position="60"/>
        <end position="80"/>
    </location>
</feature>
<feature type="transmembrane region" description="Helical" evidence="1">
    <location>
        <begin position="96"/>
        <end position="116"/>
    </location>
</feature>
<feature type="transmembrane region" description="Helical" evidence="1">
    <location>
        <begin position="130"/>
        <end position="150"/>
    </location>
</feature>
<feature type="transmembrane region" description="Helical" evidence="1">
    <location>
        <begin position="198"/>
        <end position="218"/>
    </location>
</feature>
<feature type="transmembrane region" description="Helical" evidence="1">
    <location>
        <begin position="225"/>
        <end position="245"/>
    </location>
</feature>
<feature type="transmembrane region" description="Helical" evidence="1">
    <location>
        <begin position="260"/>
        <end position="280"/>
    </location>
</feature>
<feature type="binding site" evidence="1">
    <location>
        <position position="143"/>
    </location>
    <ligand>
        <name>a 1,2-diacyl-sn-glycero-3-phospho-(1'-sn-glycerol)</name>
        <dbReference type="ChEBI" id="CHEBI:64716"/>
    </ligand>
</feature>
<dbReference type="EC" id="2.5.1.145" evidence="1"/>
<dbReference type="EMBL" id="FM200053">
    <property type="protein sequence ID" value="CAR60912.1"/>
    <property type="molecule type" value="Genomic_DNA"/>
</dbReference>
<dbReference type="RefSeq" id="WP_000204647.1">
    <property type="nucleotide sequence ID" value="NC_011147.1"/>
</dbReference>
<dbReference type="SMR" id="B5BFG7"/>
<dbReference type="KEGG" id="sek:SSPA2670"/>
<dbReference type="HOGENOM" id="CLU_013386_1_0_6"/>
<dbReference type="UniPathway" id="UPA00664"/>
<dbReference type="Proteomes" id="UP000001869">
    <property type="component" value="Chromosome"/>
</dbReference>
<dbReference type="GO" id="GO:0005886">
    <property type="term" value="C:plasma membrane"/>
    <property type="evidence" value="ECO:0007669"/>
    <property type="project" value="UniProtKB-SubCell"/>
</dbReference>
<dbReference type="GO" id="GO:0008961">
    <property type="term" value="F:phosphatidylglycerol-prolipoprotein diacylglyceryl transferase activity"/>
    <property type="evidence" value="ECO:0007669"/>
    <property type="project" value="UniProtKB-UniRule"/>
</dbReference>
<dbReference type="GO" id="GO:0042158">
    <property type="term" value="P:lipoprotein biosynthetic process"/>
    <property type="evidence" value="ECO:0007669"/>
    <property type="project" value="UniProtKB-UniRule"/>
</dbReference>
<dbReference type="HAMAP" id="MF_01147">
    <property type="entry name" value="Lgt"/>
    <property type="match status" value="1"/>
</dbReference>
<dbReference type="InterPro" id="IPR001640">
    <property type="entry name" value="Lgt"/>
</dbReference>
<dbReference type="NCBIfam" id="TIGR00544">
    <property type="entry name" value="lgt"/>
    <property type="match status" value="1"/>
</dbReference>
<dbReference type="PANTHER" id="PTHR30589:SF0">
    <property type="entry name" value="PHOSPHATIDYLGLYCEROL--PROLIPOPROTEIN DIACYLGLYCERYL TRANSFERASE"/>
    <property type="match status" value="1"/>
</dbReference>
<dbReference type="PANTHER" id="PTHR30589">
    <property type="entry name" value="PROLIPOPROTEIN DIACYLGLYCERYL TRANSFERASE"/>
    <property type="match status" value="1"/>
</dbReference>
<dbReference type="Pfam" id="PF01790">
    <property type="entry name" value="LGT"/>
    <property type="match status" value="1"/>
</dbReference>
<dbReference type="PROSITE" id="PS01311">
    <property type="entry name" value="LGT"/>
    <property type="match status" value="1"/>
</dbReference>
<comment type="function">
    <text evidence="1">Catalyzes the transfer of the diacylglyceryl group from phosphatidylglycerol to the sulfhydryl group of the N-terminal cysteine of a prolipoprotein, the first step in the formation of mature lipoproteins.</text>
</comment>
<comment type="catalytic activity">
    <reaction evidence="1">
        <text>L-cysteinyl-[prolipoprotein] + a 1,2-diacyl-sn-glycero-3-phospho-(1'-sn-glycerol) = an S-1,2-diacyl-sn-glyceryl-L-cysteinyl-[prolipoprotein] + sn-glycerol 1-phosphate + H(+)</text>
        <dbReference type="Rhea" id="RHEA:56712"/>
        <dbReference type="Rhea" id="RHEA-COMP:14679"/>
        <dbReference type="Rhea" id="RHEA-COMP:14680"/>
        <dbReference type="ChEBI" id="CHEBI:15378"/>
        <dbReference type="ChEBI" id="CHEBI:29950"/>
        <dbReference type="ChEBI" id="CHEBI:57685"/>
        <dbReference type="ChEBI" id="CHEBI:64716"/>
        <dbReference type="ChEBI" id="CHEBI:140658"/>
        <dbReference type="EC" id="2.5.1.145"/>
    </reaction>
</comment>
<comment type="pathway">
    <text evidence="1">Protein modification; lipoprotein biosynthesis (diacylglyceryl transfer).</text>
</comment>
<comment type="subcellular location">
    <subcellularLocation>
        <location evidence="1">Cell inner membrane</location>
        <topology evidence="1">Multi-pass membrane protein</topology>
    </subcellularLocation>
</comment>
<comment type="similarity">
    <text evidence="1">Belongs to the Lgt family.</text>
</comment>
<sequence length="291" mass="33074">MTSSYLHFPDFDPVIFSIGPVALHWYGLMYLVGFVFAMWLAVRRANRPGSGWTKNEVENLLYAGFLGVFLGGRIGYVLFYNFPLFLDNPLYLFRVWDGGMSFHGGLIGVILVMIIFARRTKRSFFQVSDFIAPLIPFGLGAGRLGNFINGELWGRVDPNFRFAMLFPGSRAEDIALLPSHPQWQPIFDTYGVLPRHPSQLYELALEGVVLFIILNLFIRKPRPMGAVSGLFLIGYGAFRIIVEFFRQPDAQFTGAWVQYISMGQILSIPMIIAGAIMMVWAYRRRPQQHVS</sequence>
<reference key="1">
    <citation type="journal article" date="2009" name="BMC Genomics">
        <title>Pseudogene accumulation in the evolutionary histories of Salmonella enterica serovars Paratyphi A and Typhi.</title>
        <authorList>
            <person name="Holt K.E."/>
            <person name="Thomson N.R."/>
            <person name="Wain J."/>
            <person name="Langridge G.C."/>
            <person name="Hasan R."/>
            <person name="Bhutta Z.A."/>
            <person name="Quail M.A."/>
            <person name="Norbertczak H."/>
            <person name="Walker D."/>
            <person name="Simmonds M."/>
            <person name="White B."/>
            <person name="Bason N."/>
            <person name="Mungall K."/>
            <person name="Dougan G."/>
            <person name="Parkhill J."/>
        </authorList>
    </citation>
    <scope>NUCLEOTIDE SEQUENCE [LARGE SCALE GENOMIC DNA]</scope>
    <source>
        <strain>AKU_12601</strain>
    </source>
</reference>
<evidence type="ECO:0000255" key="1">
    <source>
        <dbReference type="HAMAP-Rule" id="MF_01147"/>
    </source>
</evidence>
<gene>
    <name evidence="1" type="primary">lgt</name>
    <name type="ordered locus">SSPA2670</name>
</gene>
<proteinExistence type="inferred from homology"/>